<reference key="1">
    <citation type="journal article" date="2004" name="Proc. Natl. Acad. Sci. U.S.A.">
        <title>Complete genomes of two clinical Staphylococcus aureus strains: evidence for the rapid evolution of virulence and drug resistance.</title>
        <authorList>
            <person name="Holden M.T.G."/>
            <person name="Feil E.J."/>
            <person name="Lindsay J.A."/>
            <person name="Peacock S.J."/>
            <person name="Day N.P.J."/>
            <person name="Enright M.C."/>
            <person name="Foster T.J."/>
            <person name="Moore C.E."/>
            <person name="Hurst L."/>
            <person name="Atkin R."/>
            <person name="Barron A."/>
            <person name="Bason N."/>
            <person name="Bentley S.D."/>
            <person name="Chillingworth C."/>
            <person name="Chillingworth T."/>
            <person name="Churcher C."/>
            <person name="Clark L."/>
            <person name="Corton C."/>
            <person name="Cronin A."/>
            <person name="Doggett J."/>
            <person name="Dowd L."/>
            <person name="Feltwell T."/>
            <person name="Hance Z."/>
            <person name="Harris B."/>
            <person name="Hauser H."/>
            <person name="Holroyd S."/>
            <person name="Jagels K."/>
            <person name="James K.D."/>
            <person name="Lennard N."/>
            <person name="Line A."/>
            <person name="Mayes R."/>
            <person name="Moule S."/>
            <person name="Mungall K."/>
            <person name="Ormond D."/>
            <person name="Quail M.A."/>
            <person name="Rabbinowitsch E."/>
            <person name="Rutherford K.M."/>
            <person name="Sanders M."/>
            <person name="Sharp S."/>
            <person name="Simmonds M."/>
            <person name="Stevens K."/>
            <person name="Whitehead S."/>
            <person name="Barrell B.G."/>
            <person name="Spratt B.G."/>
            <person name="Parkhill J."/>
        </authorList>
    </citation>
    <scope>NUCLEOTIDE SEQUENCE [LARGE SCALE GENOMIC DNA]</scope>
    <source>
        <strain>MSSA476</strain>
    </source>
</reference>
<organism>
    <name type="scientific">Staphylococcus aureus (strain MSSA476)</name>
    <dbReference type="NCBI Taxonomy" id="282459"/>
    <lineage>
        <taxon>Bacteria</taxon>
        <taxon>Bacillati</taxon>
        <taxon>Bacillota</taxon>
        <taxon>Bacilli</taxon>
        <taxon>Bacillales</taxon>
        <taxon>Staphylococcaceae</taxon>
        <taxon>Staphylococcus</taxon>
    </lineage>
</organism>
<name>CODY_STAAS</name>
<accession>Q6G9V8</accession>
<comment type="function">
    <text evidence="1">DNA-binding global transcriptional regulator which is involved in the adaptive response to starvation and acts by directly or indirectly controlling the expression of numerous genes in response to nutrient availability. During rapid exponential growth, CodY is highly active and represses genes whose products allow adaptation to nutrient depletion.</text>
</comment>
<comment type="subcellular location">
    <subcellularLocation>
        <location evidence="1">Cytoplasm</location>
    </subcellularLocation>
</comment>
<comment type="similarity">
    <text evidence="1">Belongs to the CodY family.</text>
</comment>
<evidence type="ECO:0000255" key="1">
    <source>
        <dbReference type="HAMAP-Rule" id="MF_00621"/>
    </source>
</evidence>
<protein>
    <recommendedName>
        <fullName evidence="1">Global transcriptional regulator CodY</fullName>
    </recommendedName>
</protein>
<gene>
    <name evidence="1" type="primary">codY</name>
    <name type="ordered locus">SAS1189</name>
</gene>
<feature type="chain" id="PRO_0000213235" description="Global transcriptional regulator CodY">
    <location>
        <begin position="1"/>
        <end position="257"/>
    </location>
</feature>
<feature type="DNA-binding region" description="H-T-H motif" evidence="1">
    <location>
        <begin position="203"/>
        <end position="222"/>
    </location>
</feature>
<feature type="region of interest" description="GAF domain" evidence="1">
    <location>
        <begin position="1"/>
        <end position="155"/>
    </location>
</feature>
<dbReference type="EMBL" id="BX571857">
    <property type="protein sequence ID" value="CAG42966.1"/>
    <property type="molecule type" value="Genomic_DNA"/>
</dbReference>
<dbReference type="RefSeq" id="WP_000055337.1">
    <property type="nucleotide sequence ID" value="NC_002953.3"/>
</dbReference>
<dbReference type="SMR" id="Q6G9V8"/>
<dbReference type="KEGG" id="sas:SAS1189"/>
<dbReference type="HOGENOM" id="CLU_089581_0_0_9"/>
<dbReference type="GO" id="GO:0005737">
    <property type="term" value="C:cytoplasm"/>
    <property type="evidence" value="ECO:0007669"/>
    <property type="project" value="UniProtKB-SubCell"/>
</dbReference>
<dbReference type="GO" id="GO:0003677">
    <property type="term" value="F:DNA binding"/>
    <property type="evidence" value="ECO:0007669"/>
    <property type="project" value="UniProtKB-UniRule"/>
</dbReference>
<dbReference type="GO" id="GO:0003700">
    <property type="term" value="F:DNA-binding transcription factor activity"/>
    <property type="evidence" value="ECO:0007669"/>
    <property type="project" value="InterPro"/>
</dbReference>
<dbReference type="GO" id="GO:0005525">
    <property type="term" value="F:GTP binding"/>
    <property type="evidence" value="ECO:0007669"/>
    <property type="project" value="InterPro"/>
</dbReference>
<dbReference type="GO" id="GO:0045892">
    <property type="term" value="P:negative regulation of DNA-templated transcription"/>
    <property type="evidence" value="ECO:0007669"/>
    <property type="project" value="UniProtKB-UniRule"/>
</dbReference>
<dbReference type="FunFam" id="1.10.10.10:FF:000034">
    <property type="entry name" value="GTP-sensing transcriptional pleiotropic repressor CodY"/>
    <property type="match status" value="1"/>
</dbReference>
<dbReference type="FunFam" id="3.30.450.40:FF:000003">
    <property type="entry name" value="GTP-sensing transcriptional pleiotropic repressor CodY"/>
    <property type="match status" value="1"/>
</dbReference>
<dbReference type="Gene3D" id="3.30.450.40">
    <property type="match status" value="1"/>
</dbReference>
<dbReference type="Gene3D" id="1.10.10.10">
    <property type="entry name" value="Winged helix-like DNA-binding domain superfamily/Winged helix DNA-binding domain"/>
    <property type="match status" value="1"/>
</dbReference>
<dbReference type="HAMAP" id="MF_00621">
    <property type="entry name" value="HTH_type_CodY"/>
    <property type="match status" value="1"/>
</dbReference>
<dbReference type="InterPro" id="IPR014154">
    <property type="entry name" value="CodY"/>
</dbReference>
<dbReference type="InterPro" id="IPR029016">
    <property type="entry name" value="GAF-like_dom_sf"/>
</dbReference>
<dbReference type="InterPro" id="IPR013198">
    <property type="entry name" value="GTP_trans_reg_CodY_C"/>
</dbReference>
<dbReference type="InterPro" id="IPR010312">
    <property type="entry name" value="Transc_reg_CodY_N"/>
</dbReference>
<dbReference type="InterPro" id="IPR036388">
    <property type="entry name" value="WH-like_DNA-bd_sf"/>
</dbReference>
<dbReference type="InterPro" id="IPR036390">
    <property type="entry name" value="WH_DNA-bd_sf"/>
</dbReference>
<dbReference type="NCBIfam" id="TIGR02787">
    <property type="entry name" value="codY_Gpos"/>
    <property type="match status" value="1"/>
</dbReference>
<dbReference type="NCBIfam" id="NF003170">
    <property type="entry name" value="PRK04158.1"/>
    <property type="match status" value="1"/>
</dbReference>
<dbReference type="PANTHER" id="PTHR40062:SF1">
    <property type="entry name" value="GLOBAL TRANSCRIPTIONAL REGULATOR CODY"/>
    <property type="match status" value="1"/>
</dbReference>
<dbReference type="PANTHER" id="PTHR40062">
    <property type="entry name" value="GTP-SENSING TRANSCRIPTIONAL PLEIOTROPIC REPRESSOR CODY"/>
    <property type="match status" value="1"/>
</dbReference>
<dbReference type="Pfam" id="PF06018">
    <property type="entry name" value="CodY"/>
    <property type="match status" value="1"/>
</dbReference>
<dbReference type="Pfam" id="PF08222">
    <property type="entry name" value="HTH_CodY"/>
    <property type="match status" value="1"/>
</dbReference>
<dbReference type="PIRSF" id="PIRSF011572">
    <property type="entry name" value="GTP_sensing_CodY"/>
    <property type="match status" value="1"/>
</dbReference>
<dbReference type="SUPFAM" id="SSF46785">
    <property type="entry name" value="Winged helix' DNA-binding domain"/>
    <property type="match status" value="1"/>
</dbReference>
<proteinExistence type="inferred from homology"/>
<sequence>MSLLSKTRELNTLLQKHKGIAVDFKDVAQTISSVTVTNVFIVSRRGKILGSSLNELLKSQRIIQMLEERHIPSEYTERLMEVKQTESNIDIDNVLTVFPPENRELFIDSRTTIFPILGGGERLGTLVLGRVHDDFNENDLVLGEYAATVIGMEILREKHSEVEKEARDKAAITMAINSLSYSEKEAIEHIFEELGGTEGLLIASKVADRVGITRSVIVNALRKLESAGVIESRSLGMKGTFIKVKKEKFLDELEKSK</sequence>
<keyword id="KW-0963">Cytoplasm</keyword>
<keyword id="KW-0238">DNA-binding</keyword>
<keyword id="KW-0678">Repressor</keyword>
<keyword id="KW-0804">Transcription</keyword>
<keyword id="KW-0805">Transcription regulation</keyword>